<keyword id="KW-1185">Reference proteome</keyword>
<dbReference type="EMBL" id="AC004473">
    <property type="protein sequence ID" value="AAC24064.1"/>
    <property type="molecule type" value="Genomic_DNA"/>
</dbReference>
<dbReference type="EMBL" id="CP002684">
    <property type="protein sequence ID" value="AEE33679.1"/>
    <property type="molecule type" value="Genomic_DNA"/>
</dbReference>
<dbReference type="PIR" id="T02287">
    <property type="entry name" value="T02287"/>
</dbReference>
<dbReference type="RefSeq" id="NP_176240.1">
    <property type="nucleotide sequence ID" value="NM_104724.1"/>
</dbReference>
<dbReference type="FunCoup" id="O80758">
    <property type="interactions" value="3"/>
</dbReference>
<dbReference type="STRING" id="3702.O80758"/>
<dbReference type="PaxDb" id="3702-AT1G60370.1"/>
<dbReference type="EnsemblPlants" id="AT1G60370.1">
    <property type="protein sequence ID" value="AT1G60370.1"/>
    <property type="gene ID" value="AT1G60370"/>
</dbReference>
<dbReference type="GeneID" id="842332"/>
<dbReference type="Gramene" id="AT1G60370.1">
    <property type="protein sequence ID" value="AT1G60370.1"/>
    <property type="gene ID" value="AT1G60370"/>
</dbReference>
<dbReference type="KEGG" id="ath:AT1G60370"/>
<dbReference type="Araport" id="AT1G60370"/>
<dbReference type="TAIR" id="AT1G60370">
    <property type="gene designation" value="KUK"/>
</dbReference>
<dbReference type="HOGENOM" id="CLU_027176_8_3_1"/>
<dbReference type="InParanoid" id="O80758"/>
<dbReference type="OMA" id="EEESFRW"/>
<dbReference type="PhylomeDB" id="O80758"/>
<dbReference type="PRO" id="PR:O80758"/>
<dbReference type="Proteomes" id="UP000006548">
    <property type="component" value="Chromosome 1"/>
</dbReference>
<dbReference type="ExpressionAtlas" id="O80758">
    <property type="expression patterns" value="baseline and differential"/>
</dbReference>
<dbReference type="GO" id="GO:0005634">
    <property type="term" value="C:nucleus"/>
    <property type="evidence" value="ECO:0000314"/>
    <property type="project" value="TAIR"/>
</dbReference>
<dbReference type="GO" id="GO:0048364">
    <property type="term" value="P:root development"/>
    <property type="evidence" value="ECO:0000315"/>
    <property type="project" value="TAIR"/>
</dbReference>
<dbReference type="CDD" id="cd22157">
    <property type="entry name" value="F-box_AtFBW1-like"/>
    <property type="match status" value="1"/>
</dbReference>
<dbReference type="InterPro" id="IPR013187">
    <property type="entry name" value="F-box-assoc_dom_typ3"/>
</dbReference>
<dbReference type="InterPro" id="IPR017451">
    <property type="entry name" value="F-box-assoc_interact_dom"/>
</dbReference>
<dbReference type="InterPro" id="IPR036047">
    <property type="entry name" value="F-box-like_dom_sf"/>
</dbReference>
<dbReference type="InterPro" id="IPR001810">
    <property type="entry name" value="F-box_dom"/>
</dbReference>
<dbReference type="NCBIfam" id="TIGR01640">
    <property type="entry name" value="F_box_assoc_1"/>
    <property type="match status" value="1"/>
</dbReference>
<dbReference type="PANTHER" id="PTHR31111">
    <property type="entry name" value="BNAA05G37150D PROTEIN-RELATED"/>
    <property type="match status" value="1"/>
</dbReference>
<dbReference type="PANTHER" id="PTHR31111:SF130">
    <property type="entry name" value="F-BOX ASSOCIATED UBIQUITINATION EFFECTOR FAMILY PROTEIN"/>
    <property type="match status" value="1"/>
</dbReference>
<dbReference type="Pfam" id="PF00646">
    <property type="entry name" value="F-box"/>
    <property type="match status" value="1"/>
</dbReference>
<dbReference type="Pfam" id="PF08268">
    <property type="entry name" value="FBA_3"/>
    <property type="match status" value="1"/>
</dbReference>
<dbReference type="SUPFAM" id="SSF81383">
    <property type="entry name" value="F-box domain"/>
    <property type="match status" value="1"/>
</dbReference>
<name>FB68_ARATH</name>
<gene>
    <name type="ordered locus">At1g60370</name>
    <name type="ORF">T13D8.24</name>
</gene>
<protein>
    <recommendedName>
        <fullName>Putative F-box protein At1g60370</fullName>
    </recommendedName>
</protein>
<reference key="1">
    <citation type="journal article" date="2000" name="Nature">
        <title>Sequence and analysis of chromosome 1 of the plant Arabidopsis thaliana.</title>
        <authorList>
            <person name="Theologis A."/>
            <person name="Ecker J.R."/>
            <person name="Palm C.J."/>
            <person name="Federspiel N.A."/>
            <person name="Kaul S."/>
            <person name="White O."/>
            <person name="Alonso J."/>
            <person name="Altafi H."/>
            <person name="Araujo R."/>
            <person name="Bowman C.L."/>
            <person name="Brooks S.Y."/>
            <person name="Buehler E."/>
            <person name="Chan A."/>
            <person name="Chao Q."/>
            <person name="Chen H."/>
            <person name="Cheuk R.F."/>
            <person name="Chin C.W."/>
            <person name="Chung M.K."/>
            <person name="Conn L."/>
            <person name="Conway A.B."/>
            <person name="Conway A.R."/>
            <person name="Creasy T.H."/>
            <person name="Dewar K."/>
            <person name="Dunn P."/>
            <person name="Etgu P."/>
            <person name="Feldblyum T.V."/>
            <person name="Feng J.-D."/>
            <person name="Fong B."/>
            <person name="Fujii C.Y."/>
            <person name="Gill J.E."/>
            <person name="Goldsmith A.D."/>
            <person name="Haas B."/>
            <person name="Hansen N.F."/>
            <person name="Hughes B."/>
            <person name="Huizar L."/>
            <person name="Hunter J.L."/>
            <person name="Jenkins J."/>
            <person name="Johnson-Hopson C."/>
            <person name="Khan S."/>
            <person name="Khaykin E."/>
            <person name="Kim C.J."/>
            <person name="Koo H.L."/>
            <person name="Kremenetskaia I."/>
            <person name="Kurtz D.B."/>
            <person name="Kwan A."/>
            <person name="Lam B."/>
            <person name="Langin-Hooper S."/>
            <person name="Lee A."/>
            <person name="Lee J.M."/>
            <person name="Lenz C.A."/>
            <person name="Li J.H."/>
            <person name="Li Y.-P."/>
            <person name="Lin X."/>
            <person name="Liu S.X."/>
            <person name="Liu Z.A."/>
            <person name="Luros J.S."/>
            <person name="Maiti R."/>
            <person name="Marziali A."/>
            <person name="Militscher J."/>
            <person name="Miranda M."/>
            <person name="Nguyen M."/>
            <person name="Nierman W.C."/>
            <person name="Osborne B.I."/>
            <person name="Pai G."/>
            <person name="Peterson J."/>
            <person name="Pham P.K."/>
            <person name="Rizzo M."/>
            <person name="Rooney T."/>
            <person name="Rowley D."/>
            <person name="Sakano H."/>
            <person name="Salzberg S.L."/>
            <person name="Schwartz J.R."/>
            <person name="Shinn P."/>
            <person name="Southwick A.M."/>
            <person name="Sun H."/>
            <person name="Tallon L.J."/>
            <person name="Tambunga G."/>
            <person name="Toriumi M.J."/>
            <person name="Town C.D."/>
            <person name="Utterback T."/>
            <person name="Van Aken S."/>
            <person name="Vaysberg M."/>
            <person name="Vysotskaia V.S."/>
            <person name="Walker M."/>
            <person name="Wu D."/>
            <person name="Yu G."/>
            <person name="Fraser C.M."/>
            <person name="Venter J.C."/>
            <person name="Davis R.W."/>
        </authorList>
    </citation>
    <scope>NUCLEOTIDE SEQUENCE [LARGE SCALE GENOMIC DNA]</scope>
    <source>
        <strain>cv. Columbia</strain>
    </source>
</reference>
<reference key="2">
    <citation type="journal article" date="2017" name="Plant J.">
        <title>Araport11: a complete reannotation of the Arabidopsis thaliana reference genome.</title>
        <authorList>
            <person name="Cheng C.Y."/>
            <person name="Krishnakumar V."/>
            <person name="Chan A.P."/>
            <person name="Thibaud-Nissen F."/>
            <person name="Schobel S."/>
            <person name="Town C.D."/>
        </authorList>
    </citation>
    <scope>GENOME REANNOTATION</scope>
    <source>
        <strain>cv. Columbia</strain>
    </source>
</reference>
<accession>O80758</accession>
<proteinExistence type="predicted"/>
<feature type="chain" id="PRO_0000283342" description="Putative F-box protein At1g60370">
    <location>
        <begin position="1"/>
        <end position="283"/>
    </location>
</feature>
<feature type="domain" description="F-box">
    <location>
        <begin position="4"/>
        <end position="53"/>
    </location>
</feature>
<organism>
    <name type="scientific">Arabidopsis thaliana</name>
    <name type="common">Mouse-ear cress</name>
    <dbReference type="NCBI Taxonomy" id="3702"/>
    <lineage>
        <taxon>Eukaryota</taxon>
        <taxon>Viridiplantae</taxon>
        <taxon>Streptophyta</taxon>
        <taxon>Embryophyta</taxon>
        <taxon>Tracheophyta</taxon>
        <taxon>Spermatophyta</taxon>
        <taxon>Magnoliopsida</taxon>
        <taxon>eudicotyledons</taxon>
        <taxon>Gunneridae</taxon>
        <taxon>Pentapetalae</taxon>
        <taxon>rosids</taxon>
        <taxon>malvids</taxon>
        <taxon>Brassicales</taxon>
        <taxon>Brassicaceae</taxon>
        <taxon>Camelineae</taxon>
        <taxon>Arabidopsis</taxon>
    </lineage>
</organism>
<sequence>MNGGEKLESIPIDLIIEIHSRLPAESVARFRCVSKLWGSMFRRPYFTELFLTRSRARPRLLFVLQHNRKWSFSVFSSPQNQNIYEKPSFVVADFHMKFSVSTFPDFHSCSGLIHFSMMKGAYTVPVVCNPRTGQYAVLPKLTRTRYENSYSFVGYDPIEKQIKVLFMSDPDSGDDHRILTLGTTEKMLGRKIECSLTHNILSNEGVCINGVLYYKASRIVESSSDDDTSDDDDDDHERSDVIVCFDFRCEKFEFIVICFYGQLINSVQLSLKQKSHQKLDLII</sequence>